<name>RUVA_CHLPN</name>
<gene>
    <name evidence="1" type="primary">ruvA</name>
    <name type="ordered locus">CPn_0620</name>
    <name type="ordered locus">CP_0127</name>
    <name type="ordered locus">CpB0646</name>
</gene>
<accession>Q9Z7T4</accession>
<accession>Q9JQH9</accession>
<sequence>MYDYIRGTLTYVHTGAIVIECQGIGYHIAITERWAIECIRALHQDFLVFTHVIFRETEHLLYGFHSREERECFRILISFSGIGPKLALAILNALPLKVLCSVVRSEDIRALASVSGIGKKTAEKLMVELKQKLPDLLPLDSRVETSQTHTTSSCLEEGIQALAALGYSKIAAERMIAEAIKDLPEGSSLTDILPIALKKNFSGVNKD</sequence>
<keyword id="KW-0963">Cytoplasm</keyword>
<keyword id="KW-0227">DNA damage</keyword>
<keyword id="KW-0233">DNA recombination</keyword>
<keyword id="KW-0234">DNA repair</keyword>
<keyword id="KW-0238">DNA-binding</keyword>
<reference key="1">
    <citation type="journal article" date="1999" name="Nat. Genet.">
        <title>Comparative genomes of Chlamydia pneumoniae and C. trachomatis.</title>
        <authorList>
            <person name="Kalman S."/>
            <person name="Mitchell W.P."/>
            <person name="Marathe R."/>
            <person name="Lammel C.J."/>
            <person name="Fan J."/>
            <person name="Hyman R.W."/>
            <person name="Olinger L."/>
            <person name="Grimwood J."/>
            <person name="Davis R.W."/>
            <person name="Stephens R.S."/>
        </authorList>
    </citation>
    <scope>NUCLEOTIDE SEQUENCE [LARGE SCALE GENOMIC DNA]</scope>
    <source>
        <strain>CWL029</strain>
    </source>
</reference>
<reference key="2">
    <citation type="journal article" date="2000" name="Nucleic Acids Res.">
        <title>Genome sequences of Chlamydia trachomatis MoPn and Chlamydia pneumoniae AR39.</title>
        <authorList>
            <person name="Read T.D."/>
            <person name="Brunham R.C."/>
            <person name="Shen C."/>
            <person name="Gill S.R."/>
            <person name="Heidelberg J.F."/>
            <person name="White O."/>
            <person name="Hickey E.K."/>
            <person name="Peterson J.D."/>
            <person name="Utterback T.R."/>
            <person name="Berry K.J."/>
            <person name="Bass S."/>
            <person name="Linher K.D."/>
            <person name="Weidman J.F."/>
            <person name="Khouri H.M."/>
            <person name="Craven B."/>
            <person name="Bowman C."/>
            <person name="Dodson R.J."/>
            <person name="Gwinn M.L."/>
            <person name="Nelson W.C."/>
            <person name="DeBoy R.T."/>
            <person name="Kolonay J.F."/>
            <person name="McClarty G."/>
            <person name="Salzberg S.L."/>
            <person name="Eisen J.A."/>
            <person name="Fraser C.M."/>
        </authorList>
    </citation>
    <scope>NUCLEOTIDE SEQUENCE [LARGE SCALE GENOMIC DNA]</scope>
    <source>
        <strain>AR39</strain>
    </source>
</reference>
<reference key="3">
    <citation type="journal article" date="2000" name="Nucleic Acids Res.">
        <title>Comparison of whole genome sequences of Chlamydia pneumoniae J138 from Japan and CWL029 from USA.</title>
        <authorList>
            <person name="Shirai M."/>
            <person name="Hirakawa H."/>
            <person name="Kimoto M."/>
            <person name="Tabuchi M."/>
            <person name="Kishi F."/>
            <person name="Ouchi K."/>
            <person name="Shiba T."/>
            <person name="Ishii K."/>
            <person name="Hattori M."/>
            <person name="Kuhara S."/>
            <person name="Nakazawa T."/>
        </authorList>
    </citation>
    <scope>NUCLEOTIDE SEQUENCE [LARGE SCALE GENOMIC DNA]</scope>
    <source>
        <strain>J138</strain>
    </source>
</reference>
<reference key="4">
    <citation type="submission" date="2002-05" db="EMBL/GenBank/DDBJ databases">
        <title>The genome sequence of Chlamydia pneumoniae TW183 and comparison with other Chlamydia strains based on whole genome sequence analysis.</title>
        <authorList>
            <person name="Geng M.M."/>
            <person name="Schuhmacher A."/>
            <person name="Muehldorfer I."/>
            <person name="Bensch K.W."/>
            <person name="Schaefer K.P."/>
            <person name="Schneider S."/>
            <person name="Pohl T."/>
            <person name="Essig A."/>
            <person name="Marre R."/>
            <person name="Melchers K."/>
        </authorList>
    </citation>
    <scope>NUCLEOTIDE SEQUENCE [LARGE SCALE GENOMIC DNA]</scope>
    <source>
        <strain>TW-183</strain>
    </source>
</reference>
<dbReference type="EMBL" id="AE001363">
    <property type="protein sequence ID" value="AAD18759.1"/>
    <property type="molecule type" value="Genomic_DNA"/>
</dbReference>
<dbReference type="EMBL" id="AE002161">
    <property type="protein sequence ID" value="AAF38010.1"/>
    <property type="molecule type" value="Genomic_DNA"/>
</dbReference>
<dbReference type="EMBL" id="BA000008">
    <property type="protein sequence ID" value="BAA98827.1"/>
    <property type="molecule type" value="Genomic_DNA"/>
</dbReference>
<dbReference type="EMBL" id="AE009440">
    <property type="protein sequence ID" value="AAP98575.1"/>
    <property type="molecule type" value="Genomic_DNA"/>
</dbReference>
<dbReference type="PIR" id="A86568">
    <property type="entry name" value="A86568"/>
</dbReference>
<dbReference type="PIR" id="H72056">
    <property type="entry name" value="H72056"/>
</dbReference>
<dbReference type="RefSeq" id="NP_224816.1">
    <property type="nucleotide sequence ID" value="NC_000922.1"/>
</dbReference>
<dbReference type="RefSeq" id="WP_010883258.1">
    <property type="nucleotide sequence ID" value="NZ_LN847257.1"/>
</dbReference>
<dbReference type="SMR" id="Q9Z7T4"/>
<dbReference type="STRING" id="406984.CPK_ORF00020"/>
<dbReference type="GeneID" id="45050669"/>
<dbReference type="KEGG" id="cpa:CP_0127"/>
<dbReference type="KEGG" id="cpj:ruvA"/>
<dbReference type="KEGG" id="cpn:CPn_0620"/>
<dbReference type="KEGG" id="cpt:CpB0646"/>
<dbReference type="PATRIC" id="fig|115713.3.peg.690"/>
<dbReference type="eggNOG" id="COG0632">
    <property type="taxonomic scope" value="Bacteria"/>
</dbReference>
<dbReference type="HOGENOM" id="CLU_087936_3_0_0"/>
<dbReference type="OMA" id="ECAGVGY"/>
<dbReference type="OrthoDB" id="5293449at2"/>
<dbReference type="Proteomes" id="UP000000583">
    <property type="component" value="Chromosome"/>
</dbReference>
<dbReference type="Proteomes" id="UP000000801">
    <property type="component" value="Chromosome"/>
</dbReference>
<dbReference type="GO" id="GO:0005737">
    <property type="term" value="C:cytoplasm"/>
    <property type="evidence" value="ECO:0007669"/>
    <property type="project" value="UniProtKB-SubCell"/>
</dbReference>
<dbReference type="GO" id="GO:0009379">
    <property type="term" value="C:Holliday junction helicase complex"/>
    <property type="evidence" value="ECO:0007669"/>
    <property type="project" value="InterPro"/>
</dbReference>
<dbReference type="GO" id="GO:0048476">
    <property type="term" value="C:Holliday junction resolvase complex"/>
    <property type="evidence" value="ECO:0007669"/>
    <property type="project" value="UniProtKB-UniRule"/>
</dbReference>
<dbReference type="GO" id="GO:0005524">
    <property type="term" value="F:ATP binding"/>
    <property type="evidence" value="ECO:0007669"/>
    <property type="project" value="InterPro"/>
</dbReference>
<dbReference type="GO" id="GO:0000400">
    <property type="term" value="F:four-way junction DNA binding"/>
    <property type="evidence" value="ECO:0007669"/>
    <property type="project" value="UniProtKB-UniRule"/>
</dbReference>
<dbReference type="GO" id="GO:0009378">
    <property type="term" value="F:four-way junction helicase activity"/>
    <property type="evidence" value="ECO:0007669"/>
    <property type="project" value="InterPro"/>
</dbReference>
<dbReference type="GO" id="GO:0006310">
    <property type="term" value="P:DNA recombination"/>
    <property type="evidence" value="ECO:0007669"/>
    <property type="project" value="UniProtKB-UniRule"/>
</dbReference>
<dbReference type="GO" id="GO:0006281">
    <property type="term" value="P:DNA repair"/>
    <property type="evidence" value="ECO:0007669"/>
    <property type="project" value="UniProtKB-UniRule"/>
</dbReference>
<dbReference type="CDD" id="cd14332">
    <property type="entry name" value="UBA_RuvA_C"/>
    <property type="match status" value="1"/>
</dbReference>
<dbReference type="Gene3D" id="1.10.150.20">
    <property type="entry name" value="5' to 3' exonuclease, C-terminal subdomain"/>
    <property type="match status" value="1"/>
</dbReference>
<dbReference type="Gene3D" id="1.10.8.10">
    <property type="entry name" value="DNA helicase RuvA subunit, C-terminal domain"/>
    <property type="match status" value="1"/>
</dbReference>
<dbReference type="Gene3D" id="2.40.50.140">
    <property type="entry name" value="Nucleic acid-binding proteins"/>
    <property type="match status" value="1"/>
</dbReference>
<dbReference type="HAMAP" id="MF_00031">
    <property type="entry name" value="DNA_HJ_migration_RuvA"/>
    <property type="match status" value="1"/>
</dbReference>
<dbReference type="InterPro" id="IPR013849">
    <property type="entry name" value="DNA_helicase_Holl-junc_RuvA_I"/>
</dbReference>
<dbReference type="InterPro" id="IPR003583">
    <property type="entry name" value="Hlx-hairpin-Hlx_DNA-bd_motif"/>
</dbReference>
<dbReference type="InterPro" id="IPR012340">
    <property type="entry name" value="NA-bd_OB-fold"/>
</dbReference>
<dbReference type="InterPro" id="IPR000085">
    <property type="entry name" value="RuvA"/>
</dbReference>
<dbReference type="InterPro" id="IPR010994">
    <property type="entry name" value="RuvA_2-like"/>
</dbReference>
<dbReference type="InterPro" id="IPR011114">
    <property type="entry name" value="RuvA_C"/>
</dbReference>
<dbReference type="InterPro" id="IPR036267">
    <property type="entry name" value="RuvA_C_sf"/>
</dbReference>
<dbReference type="NCBIfam" id="TIGR00084">
    <property type="entry name" value="ruvA"/>
    <property type="match status" value="1"/>
</dbReference>
<dbReference type="Pfam" id="PF14520">
    <property type="entry name" value="HHH_5"/>
    <property type="match status" value="1"/>
</dbReference>
<dbReference type="Pfam" id="PF01330">
    <property type="entry name" value="RuvA_N"/>
    <property type="match status" value="1"/>
</dbReference>
<dbReference type="SMART" id="SM00278">
    <property type="entry name" value="HhH1"/>
    <property type="match status" value="2"/>
</dbReference>
<dbReference type="SUPFAM" id="SSF46929">
    <property type="entry name" value="DNA helicase RuvA subunit, C-terminal domain"/>
    <property type="match status" value="1"/>
</dbReference>
<dbReference type="SUPFAM" id="SSF50249">
    <property type="entry name" value="Nucleic acid-binding proteins"/>
    <property type="match status" value="1"/>
</dbReference>
<dbReference type="SUPFAM" id="SSF47781">
    <property type="entry name" value="RuvA domain 2-like"/>
    <property type="match status" value="1"/>
</dbReference>
<feature type="chain" id="PRO_0000094617" description="Holliday junction branch migration complex subunit RuvA">
    <location>
        <begin position="1"/>
        <end position="207"/>
    </location>
</feature>
<feature type="region of interest" description="Domain I" evidence="1">
    <location>
        <begin position="1"/>
        <end position="65"/>
    </location>
</feature>
<feature type="region of interest" description="Domain II" evidence="1">
    <location>
        <begin position="66"/>
        <end position="144"/>
    </location>
</feature>
<feature type="region of interest" description="Flexible linker" evidence="1">
    <location>
        <begin position="145"/>
        <end position="150"/>
    </location>
</feature>
<feature type="region of interest" description="Domain III" evidence="1">
    <location>
        <begin position="150"/>
        <end position="207"/>
    </location>
</feature>
<comment type="function">
    <text evidence="1">The RuvA-RuvB-RuvC complex processes Holliday junction (HJ) DNA during genetic recombination and DNA repair, while the RuvA-RuvB complex plays an important role in the rescue of blocked DNA replication forks via replication fork reversal (RFR). RuvA specifically binds to HJ cruciform DNA, conferring on it an open structure. The RuvB hexamer acts as an ATP-dependent pump, pulling dsDNA into and through the RuvAB complex. HJ branch migration allows RuvC to scan DNA until it finds its consensus sequence, where it cleaves and resolves the cruciform DNA.</text>
</comment>
<comment type="subunit">
    <text evidence="1">Homotetramer. Forms an RuvA(8)-RuvB(12)-Holliday junction (HJ) complex. HJ DNA is sandwiched between 2 RuvA tetramers; dsDNA enters through RuvA and exits via RuvB. An RuvB hexamer assembles on each DNA strand where it exits the tetramer. Each RuvB hexamer is contacted by two RuvA subunits (via domain III) on 2 adjacent RuvB subunits; this complex drives branch migration. In the full resolvosome a probable DNA-RuvA(4)-RuvB(12)-RuvC(2) complex forms which resolves the HJ.</text>
</comment>
<comment type="subcellular location">
    <subcellularLocation>
        <location evidence="1">Cytoplasm</location>
    </subcellularLocation>
</comment>
<comment type="domain">
    <text evidence="1">Has three domains with a flexible linker between the domains II and III and assumes an 'L' shape. Domain III is highly mobile and contacts RuvB.</text>
</comment>
<comment type="similarity">
    <text evidence="1">Belongs to the RuvA family.</text>
</comment>
<proteinExistence type="inferred from homology"/>
<evidence type="ECO:0000255" key="1">
    <source>
        <dbReference type="HAMAP-Rule" id="MF_00031"/>
    </source>
</evidence>
<organism>
    <name type="scientific">Chlamydia pneumoniae</name>
    <name type="common">Chlamydophila pneumoniae</name>
    <dbReference type="NCBI Taxonomy" id="83558"/>
    <lineage>
        <taxon>Bacteria</taxon>
        <taxon>Pseudomonadati</taxon>
        <taxon>Chlamydiota</taxon>
        <taxon>Chlamydiia</taxon>
        <taxon>Chlamydiales</taxon>
        <taxon>Chlamydiaceae</taxon>
        <taxon>Chlamydia/Chlamydophila group</taxon>
        <taxon>Chlamydia</taxon>
    </lineage>
</organism>
<protein>
    <recommendedName>
        <fullName evidence="1">Holliday junction branch migration complex subunit RuvA</fullName>
    </recommendedName>
</protein>